<keyword id="KW-0560">Oxidoreductase</keyword>
<keyword id="KW-0663">Pyridoxal phosphate</keyword>
<name>GCSPB_THEP1</name>
<organism>
    <name type="scientific">Thermotoga petrophila (strain ATCC BAA-488 / DSM 13995 / JCM 10881 / RKU-1)</name>
    <dbReference type="NCBI Taxonomy" id="390874"/>
    <lineage>
        <taxon>Bacteria</taxon>
        <taxon>Thermotogati</taxon>
        <taxon>Thermotogota</taxon>
        <taxon>Thermotogae</taxon>
        <taxon>Thermotogales</taxon>
        <taxon>Thermotogaceae</taxon>
        <taxon>Thermotoga</taxon>
    </lineage>
</organism>
<proteinExistence type="inferred from homology"/>
<dbReference type="EC" id="1.4.4.2" evidence="1"/>
<dbReference type="EMBL" id="CP000702">
    <property type="protein sequence ID" value="ABQ46730.1"/>
    <property type="molecule type" value="Genomic_DNA"/>
</dbReference>
<dbReference type="RefSeq" id="WP_011943314.1">
    <property type="nucleotide sequence ID" value="NC_009486.1"/>
</dbReference>
<dbReference type="SMR" id="A5IKK7"/>
<dbReference type="STRING" id="390874.Tpet_0710"/>
<dbReference type="KEGG" id="tpt:Tpet_0710"/>
<dbReference type="eggNOG" id="COG1003">
    <property type="taxonomic scope" value="Bacteria"/>
</dbReference>
<dbReference type="HOGENOM" id="CLU_004620_5_0_0"/>
<dbReference type="Proteomes" id="UP000006558">
    <property type="component" value="Chromosome"/>
</dbReference>
<dbReference type="GO" id="GO:0005829">
    <property type="term" value="C:cytosol"/>
    <property type="evidence" value="ECO:0007669"/>
    <property type="project" value="TreeGrafter"/>
</dbReference>
<dbReference type="GO" id="GO:0005960">
    <property type="term" value="C:glycine cleavage complex"/>
    <property type="evidence" value="ECO:0007669"/>
    <property type="project" value="TreeGrafter"/>
</dbReference>
<dbReference type="GO" id="GO:0016594">
    <property type="term" value="F:glycine binding"/>
    <property type="evidence" value="ECO:0007669"/>
    <property type="project" value="TreeGrafter"/>
</dbReference>
<dbReference type="GO" id="GO:0004375">
    <property type="term" value="F:glycine dehydrogenase (decarboxylating) activity"/>
    <property type="evidence" value="ECO:0007669"/>
    <property type="project" value="UniProtKB-EC"/>
</dbReference>
<dbReference type="GO" id="GO:0030170">
    <property type="term" value="F:pyridoxal phosphate binding"/>
    <property type="evidence" value="ECO:0007669"/>
    <property type="project" value="TreeGrafter"/>
</dbReference>
<dbReference type="GO" id="GO:0019464">
    <property type="term" value="P:glycine decarboxylation via glycine cleavage system"/>
    <property type="evidence" value="ECO:0007669"/>
    <property type="project" value="UniProtKB-UniRule"/>
</dbReference>
<dbReference type="CDD" id="cd00613">
    <property type="entry name" value="GDC-P"/>
    <property type="match status" value="1"/>
</dbReference>
<dbReference type="FunFam" id="3.40.640.10:FF:000034">
    <property type="entry name" value="Probable glycine dehydrogenase (decarboxylating) subunit 2"/>
    <property type="match status" value="1"/>
</dbReference>
<dbReference type="FunFam" id="3.90.1150.10:FF:000014">
    <property type="entry name" value="Probable glycine dehydrogenase (decarboxylating) subunit 2"/>
    <property type="match status" value="1"/>
</dbReference>
<dbReference type="Gene3D" id="6.20.440.10">
    <property type="match status" value="1"/>
</dbReference>
<dbReference type="Gene3D" id="3.90.1150.10">
    <property type="entry name" value="Aspartate Aminotransferase, domain 1"/>
    <property type="match status" value="1"/>
</dbReference>
<dbReference type="Gene3D" id="3.40.640.10">
    <property type="entry name" value="Type I PLP-dependent aspartate aminotransferase-like (Major domain)"/>
    <property type="match status" value="1"/>
</dbReference>
<dbReference type="HAMAP" id="MF_00713">
    <property type="entry name" value="GcvPB"/>
    <property type="match status" value="1"/>
</dbReference>
<dbReference type="InterPro" id="IPR023012">
    <property type="entry name" value="GcvPB"/>
</dbReference>
<dbReference type="InterPro" id="IPR049316">
    <property type="entry name" value="GDC-P_C"/>
</dbReference>
<dbReference type="InterPro" id="IPR049315">
    <property type="entry name" value="GDC-P_N"/>
</dbReference>
<dbReference type="InterPro" id="IPR020581">
    <property type="entry name" value="GDC_P"/>
</dbReference>
<dbReference type="InterPro" id="IPR015424">
    <property type="entry name" value="PyrdxlP-dep_Trfase"/>
</dbReference>
<dbReference type="InterPro" id="IPR015421">
    <property type="entry name" value="PyrdxlP-dep_Trfase_major"/>
</dbReference>
<dbReference type="InterPro" id="IPR015422">
    <property type="entry name" value="PyrdxlP-dep_Trfase_small"/>
</dbReference>
<dbReference type="NCBIfam" id="NF003346">
    <property type="entry name" value="PRK04366.1"/>
    <property type="match status" value="1"/>
</dbReference>
<dbReference type="PANTHER" id="PTHR11773:SF1">
    <property type="entry name" value="GLYCINE DEHYDROGENASE (DECARBOXYLATING), MITOCHONDRIAL"/>
    <property type="match status" value="1"/>
</dbReference>
<dbReference type="PANTHER" id="PTHR11773">
    <property type="entry name" value="GLYCINE DEHYDROGENASE, DECARBOXYLATING"/>
    <property type="match status" value="1"/>
</dbReference>
<dbReference type="Pfam" id="PF21478">
    <property type="entry name" value="GcvP2_C"/>
    <property type="match status" value="1"/>
</dbReference>
<dbReference type="Pfam" id="PF02347">
    <property type="entry name" value="GDC-P"/>
    <property type="match status" value="1"/>
</dbReference>
<dbReference type="SUPFAM" id="SSF53383">
    <property type="entry name" value="PLP-dependent transferases"/>
    <property type="match status" value="1"/>
</dbReference>
<protein>
    <recommendedName>
        <fullName evidence="1">Probable glycine dehydrogenase (decarboxylating) subunit 2</fullName>
        <ecNumber evidence="1">1.4.4.2</ecNumber>
    </recommendedName>
    <alternativeName>
        <fullName evidence="1">Glycine cleavage system P-protein subunit 2</fullName>
    </alternativeName>
    <alternativeName>
        <fullName evidence="1">Glycine decarboxylase subunit 2</fullName>
    </alternativeName>
    <alternativeName>
        <fullName evidence="1">Glycine dehydrogenase (aminomethyl-transferring) subunit 2</fullName>
    </alternativeName>
</protein>
<sequence>MTIFERSKKGRKAFRLPESDIPEYSLPNRFLRRTPPELPEVSEPDVVRHYTDLARKNYSVDRGIYPLGSCTMKYNPKLNEKVANLEGFREIHPYQPAETVQGSLRLMYELKEMLCEITGMDDMTLQPAAGAHGELTGMLIVREYFKSRGDTGRKKVLVPDSAHGTNPASASMVGFEVVEIKSKNGMVDVEDLKKLLDEEVAAVMLTNPNTLGLFEKDILKIAEMTHECGALLYYDGANLNAVMGKVRPGDMGFDIVHLNLHKTFSTPHGMGGPGSGPVGVKKHLVDFLPFPQVRKNGELYELFVPEKTIGRVRSFFGNFPVLVKAYTYILTMGRDGLERVSEMAVLNANYLKKKIEKFLEIPYNGFCMHEFVASAEKVFRETGVRTLDIAKRILDFGVHPPTVYFPLIVLEALMIEPTETENKETLDKYAEILERVVKEAYENPDVLKNAPHNTPVRRVDEVLASKKPVFRWRG</sequence>
<reference key="1">
    <citation type="submission" date="2007-05" db="EMBL/GenBank/DDBJ databases">
        <title>Complete sequence of Thermotoga petrophila RKU-1.</title>
        <authorList>
            <consortium name="US DOE Joint Genome Institute"/>
            <person name="Copeland A."/>
            <person name="Lucas S."/>
            <person name="Lapidus A."/>
            <person name="Barry K."/>
            <person name="Glavina del Rio T."/>
            <person name="Dalin E."/>
            <person name="Tice H."/>
            <person name="Pitluck S."/>
            <person name="Sims D."/>
            <person name="Brettin T."/>
            <person name="Bruce D."/>
            <person name="Detter J.C."/>
            <person name="Han C."/>
            <person name="Tapia R."/>
            <person name="Schmutz J."/>
            <person name="Larimer F."/>
            <person name="Land M."/>
            <person name="Hauser L."/>
            <person name="Kyrpides N."/>
            <person name="Mikhailova N."/>
            <person name="Nelson K."/>
            <person name="Gogarten J.P."/>
            <person name="Noll K."/>
            <person name="Richardson P."/>
        </authorList>
    </citation>
    <scope>NUCLEOTIDE SEQUENCE [LARGE SCALE GENOMIC DNA]</scope>
    <source>
        <strain>ATCC BAA-488 / DSM 13995 / JCM 10881 / RKU-1</strain>
    </source>
</reference>
<comment type="function">
    <text evidence="1">The glycine cleavage system catalyzes the degradation of glycine. The P protein binds the alpha-amino group of glycine through its pyridoxal phosphate cofactor; CO(2) is released and the remaining methylamine moiety is then transferred to the lipoamide cofactor of the H protein.</text>
</comment>
<comment type="catalytic activity">
    <reaction evidence="1">
        <text>N(6)-[(R)-lipoyl]-L-lysyl-[glycine-cleavage complex H protein] + glycine + H(+) = N(6)-[(R)-S(8)-aminomethyldihydrolipoyl]-L-lysyl-[glycine-cleavage complex H protein] + CO2</text>
        <dbReference type="Rhea" id="RHEA:24304"/>
        <dbReference type="Rhea" id="RHEA-COMP:10494"/>
        <dbReference type="Rhea" id="RHEA-COMP:10495"/>
        <dbReference type="ChEBI" id="CHEBI:15378"/>
        <dbReference type="ChEBI" id="CHEBI:16526"/>
        <dbReference type="ChEBI" id="CHEBI:57305"/>
        <dbReference type="ChEBI" id="CHEBI:83099"/>
        <dbReference type="ChEBI" id="CHEBI:83143"/>
        <dbReference type="EC" id="1.4.4.2"/>
    </reaction>
</comment>
<comment type="cofactor">
    <cofactor evidence="1">
        <name>pyridoxal 5'-phosphate</name>
        <dbReference type="ChEBI" id="CHEBI:597326"/>
    </cofactor>
</comment>
<comment type="subunit">
    <text evidence="1">The glycine cleavage system is composed of four proteins: P, T, L and H. In this organism, the P 'protein' is a heterodimer of two subunits.</text>
</comment>
<comment type="similarity">
    <text evidence="1">Belongs to the GcvP family. C-terminal subunit subfamily.</text>
</comment>
<feature type="chain" id="PRO_1000045708" description="Probable glycine dehydrogenase (decarboxylating) subunit 2">
    <location>
        <begin position="1"/>
        <end position="474"/>
    </location>
</feature>
<feature type="modified residue" description="N6-(pyridoxal phosphate)lysine" evidence="1">
    <location>
        <position position="262"/>
    </location>
</feature>
<accession>A5IKK7</accession>
<evidence type="ECO:0000255" key="1">
    <source>
        <dbReference type="HAMAP-Rule" id="MF_00713"/>
    </source>
</evidence>
<gene>
    <name evidence="1" type="primary">gcvPB</name>
    <name type="ordered locus">Tpet_0710</name>
</gene>